<dbReference type="EMBL" id="FM178379">
    <property type="protein sequence ID" value="CAQ78281.1"/>
    <property type="molecule type" value="Genomic_DNA"/>
</dbReference>
<dbReference type="RefSeq" id="WP_012549404.1">
    <property type="nucleotide sequence ID" value="NC_011312.1"/>
</dbReference>
<dbReference type="SMR" id="B6ENE0"/>
<dbReference type="GeneID" id="56275147"/>
<dbReference type="KEGG" id="vsa:VSAL_I0596"/>
<dbReference type="eggNOG" id="COG0779">
    <property type="taxonomic scope" value="Bacteria"/>
</dbReference>
<dbReference type="HOGENOM" id="CLU_070525_1_1_6"/>
<dbReference type="Proteomes" id="UP000001730">
    <property type="component" value="Chromosome 1"/>
</dbReference>
<dbReference type="GO" id="GO:0005829">
    <property type="term" value="C:cytosol"/>
    <property type="evidence" value="ECO:0007669"/>
    <property type="project" value="TreeGrafter"/>
</dbReference>
<dbReference type="GO" id="GO:0000028">
    <property type="term" value="P:ribosomal small subunit assembly"/>
    <property type="evidence" value="ECO:0007669"/>
    <property type="project" value="TreeGrafter"/>
</dbReference>
<dbReference type="GO" id="GO:0006412">
    <property type="term" value="P:translation"/>
    <property type="evidence" value="ECO:0007669"/>
    <property type="project" value="TreeGrafter"/>
</dbReference>
<dbReference type="CDD" id="cd01734">
    <property type="entry name" value="YlxS_C"/>
    <property type="match status" value="1"/>
</dbReference>
<dbReference type="FunFam" id="2.30.30.180:FF:000001">
    <property type="entry name" value="Ribosome maturation factor RimP"/>
    <property type="match status" value="1"/>
</dbReference>
<dbReference type="FunFam" id="3.30.300.70:FF:000001">
    <property type="entry name" value="Ribosome maturation factor RimP"/>
    <property type="match status" value="1"/>
</dbReference>
<dbReference type="Gene3D" id="2.30.30.180">
    <property type="entry name" value="Ribosome maturation factor RimP, C-terminal domain"/>
    <property type="match status" value="1"/>
</dbReference>
<dbReference type="Gene3D" id="3.30.300.70">
    <property type="entry name" value="RimP-like superfamily, N-terminal"/>
    <property type="match status" value="1"/>
</dbReference>
<dbReference type="HAMAP" id="MF_01077">
    <property type="entry name" value="RimP"/>
    <property type="match status" value="1"/>
</dbReference>
<dbReference type="InterPro" id="IPR003728">
    <property type="entry name" value="Ribosome_maturation_RimP"/>
</dbReference>
<dbReference type="InterPro" id="IPR028998">
    <property type="entry name" value="RimP_C"/>
</dbReference>
<dbReference type="InterPro" id="IPR036847">
    <property type="entry name" value="RimP_C_sf"/>
</dbReference>
<dbReference type="InterPro" id="IPR028989">
    <property type="entry name" value="RimP_N"/>
</dbReference>
<dbReference type="InterPro" id="IPR035956">
    <property type="entry name" value="RimP_N_sf"/>
</dbReference>
<dbReference type="NCBIfam" id="NF000927">
    <property type="entry name" value="PRK00092.1-1"/>
    <property type="match status" value="1"/>
</dbReference>
<dbReference type="PANTHER" id="PTHR33867">
    <property type="entry name" value="RIBOSOME MATURATION FACTOR RIMP"/>
    <property type="match status" value="1"/>
</dbReference>
<dbReference type="PANTHER" id="PTHR33867:SF1">
    <property type="entry name" value="RIBOSOME MATURATION FACTOR RIMP"/>
    <property type="match status" value="1"/>
</dbReference>
<dbReference type="Pfam" id="PF17384">
    <property type="entry name" value="DUF150_C"/>
    <property type="match status" value="1"/>
</dbReference>
<dbReference type="Pfam" id="PF02576">
    <property type="entry name" value="RimP_N"/>
    <property type="match status" value="1"/>
</dbReference>
<dbReference type="SUPFAM" id="SSF74942">
    <property type="entry name" value="YhbC-like, C-terminal domain"/>
    <property type="match status" value="1"/>
</dbReference>
<dbReference type="SUPFAM" id="SSF75420">
    <property type="entry name" value="YhbC-like, N-terminal domain"/>
    <property type="match status" value="1"/>
</dbReference>
<protein>
    <recommendedName>
        <fullName evidence="1">Ribosome maturation factor RimP</fullName>
    </recommendedName>
</protein>
<proteinExistence type="inferred from homology"/>
<evidence type="ECO:0000255" key="1">
    <source>
        <dbReference type="HAMAP-Rule" id="MF_01077"/>
    </source>
</evidence>
<accession>B6ENE0</accession>
<feature type="chain" id="PRO_1000136729" description="Ribosome maturation factor RimP">
    <location>
        <begin position="1"/>
        <end position="151"/>
    </location>
</feature>
<organism>
    <name type="scientific">Aliivibrio salmonicida (strain LFI1238)</name>
    <name type="common">Vibrio salmonicida (strain LFI1238)</name>
    <dbReference type="NCBI Taxonomy" id="316275"/>
    <lineage>
        <taxon>Bacteria</taxon>
        <taxon>Pseudomonadati</taxon>
        <taxon>Pseudomonadota</taxon>
        <taxon>Gammaproteobacteria</taxon>
        <taxon>Vibrionales</taxon>
        <taxon>Vibrionaceae</taxon>
        <taxon>Aliivibrio</taxon>
    </lineage>
</organism>
<gene>
    <name evidence="1" type="primary">rimP</name>
    <name type="ordered locus">VSAL_I0596</name>
</gene>
<keyword id="KW-0963">Cytoplasm</keyword>
<keyword id="KW-0690">Ribosome biogenesis</keyword>
<comment type="function">
    <text evidence="1">Required for maturation of 30S ribosomal subunits.</text>
</comment>
<comment type="subcellular location">
    <subcellularLocation>
        <location evidence="1">Cytoplasm</location>
    </subcellularLocation>
</comment>
<comment type="similarity">
    <text evidence="1">Belongs to the RimP family.</text>
</comment>
<sequence>MTGLERQLTEMLEAPVGALGYELVGLEFIRAGEHSTLRVFIDHENGIFVEDCAEASRQISAVMDVEDPITVAYNLEVSSPGLERPLFKAAHYQQFVGHEVSLVLKMPMNNRRKWKGDILDINGEIVTVTVDGNNEEFALSNISKANLVPKF</sequence>
<reference key="1">
    <citation type="journal article" date="2008" name="BMC Genomics">
        <title>The genome sequence of the fish pathogen Aliivibrio salmonicida strain LFI1238 shows extensive evidence of gene decay.</title>
        <authorList>
            <person name="Hjerde E."/>
            <person name="Lorentzen M.S."/>
            <person name="Holden M.T."/>
            <person name="Seeger K."/>
            <person name="Paulsen S."/>
            <person name="Bason N."/>
            <person name="Churcher C."/>
            <person name="Harris D."/>
            <person name="Norbertczak H."/>
            <person name="Quail M.A."/>
            <person name="Sanders S."/>
            <person name="Thurston S."/>
            <person name="Parkhill J."/>
            <person name="Willassen N.P."/>
            <person name="Thomson N.R."/>
        </authorList>
    </citation>
    <scope>NUCLEOTIDE SEQUENCE [LARGE SCALE GENOMIC DNA]</scope>
    <source>
        <strain>LFI1238</strain>
    </source>
</reference>
<name>RIMP_ALISL</name>